<proteinExistence type="inferred from homology"/>
<feature type="chain" id="PRO_1000128633" description="Small ribosomal subunit protein uS14">
    <location>
        <begin position="1"/>
        <end position="101"/>
    </location>
</feature>
<evidence type="ECO:0000255" key="1">
    <source>
        <dbReference type="HAMAP-Rule" id="MF_00537"/>
    </source>
</evidence>
<evidence type="ECO:0000305" key="2"/>
<accession>Q8DE53</accession>
<dbReference type="EMBL" id="AE016795">
    <property type="protein sequence ID" value="AAO09256.1"/>
    <property type="molecule type" value="Genomic_DNA"/>
</dbReference>
<dbReference type="RefSeq" id="WP_011078820.1">
    <property type="nucleotide sequence ID" value="NC_004459.3"/>
</dbReference>
<dbReference type="SMR" id="Q8DE53"/>
<dbReference type="GeneID" id="93895053"/>
<dbReference type="KEGG" id="vvu:VV1_0747"/>
<dbReference type="HOGENOM" id="CLU_139869_0_1_6"/>
<dbReference type="Proteomes" id="UP000002275">
    <property type="component" value="Chromosome 1"/>
</dbReference>
<dbReference type="GO" id="GO:0005737">
    <property type="term" value="C:cytoplasm"/>
    <property type="evidence" value="ECO:0007669"/>
    <property type="project" value="UniProtKB-ARBA"/>
</dbReference>
<dbReference type="GO" id="GO:0015935">
    <property type="term" value="C:small ribosomal subunit"/>
    <property type="evidence" value="ECO:0007669"/>
    <property type="project" value="TreeGrafter"/>
</dbReference>
<dbReference type="GO" id="GO:0019843">
    <property type="term" value="F:rRNA binding"/>
    <property type="evidence" value="ECO:0007669"/>
    <property type="project" value="UniProtKB-UniRule"/>
</dbReference>
<dbReference type="GO" id="GO:0003735">
    <property type="term" value="F:structural constituent of ribosome"/>
    <property type="evidence" value="ECO:0007669"/>
    <property type="project" value="InterPro"/>
</dbReference>
<dbReference type="GO" id="GO:0006412">
    <property type="term" value="P:translation"/>
    <property type="evidence" value="ECO:0007669"/>
    <property type="project" value="UniProtKB-UniRule"/>
</dbReference>
<dbReference type="FunFam" id="1.10.287.1480:FF:000001">
    <property type="entry name" value="30S ribosomal protein S14"/>
    <property type="match status" value="1"/>
</dbReference>
<dbReference type="Gene3D" id="1.10.287.1480">
    <property type="match status" value="1"/>
</dbReference>
<dbReference type="HAMAP" id="MF_00537">
    <property type="entry name" value="Ribosomal_uS14_1"/>
    <property type="match status" value="1"/>
</dbReference>
<dbReference type="InterPro" id="IPR001209">
    <property type="entry name" value="Ribosomal_uS14"/>
</dbReference>
<dbReference type="InterPro" id="IPR023036">
    <property type="entry name" value="Ribosomal_uS14_bac/plastid"/>
</dbReference>
<dbReference type="InterPro" id="IPR018271">
    <property type="entry name" value="Ribosomal_uS14_CS"/>
</dbReference>
<dbReference type="NCBIfam" id="NF006477">
    <property type="entry name" value="PRK08881.1"/>
    <property type="match status" value="1"/>
</dbReference>
<dbReference type="PANTHER" id="PTHR19836">
    <property type="entry name" value="30S RIBOSOMAL PROTEIN S14"/>
    <property type="match status" value="1"/>
</dbReference>
<dbReference type="PANTHER" id="PTHR19836:SF19">
    <property type="entry name" value="SMALL RIBOSOMAL SUBUNIT PROTEIN US14M"/>
    <property type="match status" value="1"/>
</dbReference>
<dbReference type="Pfam" id="PF00253">
    <property type="entry name" value="Ribosomal_S14"/>
    <property type="match status" value="1"/>
</dbReference>
<dbReference type="SUPFAM" id="SSF57716">
    <property type="entry name" value="Glucocorticoid receptor-like (DNA-binding domain)"/>
    <property type="match status" value="1"/>
</dbReference>
<dbReference type="PROSITE" id="PS00527">
    <property type="entry name" value="RIBOSOMAL_S14"/>
    <property type="match status" value="1"/>
</dbReference>
<sequence length="101" mass="11511">MAKQSMKAREAKRAKLVAKFAEKRASLKAIISDVNVSEEDRWNAVLKLQTLPRDSSASRQRNRCNQTGRPHGYLRKFGLSRIKVREACMKGEIPGLRKASW</sequence>
<gene>
    <name evidence="1" type="primary">rpsN</name>
    <name type="ordered locus">VV1_0747</name>
</gene>
<comment type="function">
    <text evidence="1">Binds 16S rRNA, required for the assembly of 30S particles and may also be responsible for determining the conformation of the 16S rRNA at the A site.</text>
</comment>
<comment type="subunit">
    <text evidence="1">Part of the 30S ribosomal subunit. Contacts proteins S3 and S10.</text>
</comment>
<comment type="similarity">
    <text evidence="1">Belongs to the universal ribosomal protein uS14 family.</text>
</comment>
<keyword id="KW-0687">Ribonucleoprotein</keyword>
<keyword id="KW-0689">Ribosomal protein</keyword>
<keyword id="KW-0694">RNA-binding</keyword>
<keyword id="KW-0699">rRNA-binding</keyword>
<protein>
    <recommendedName>
        <fullName evidence="1">Small ribosomal subunit protein uS14</fullName>
    </recommendedName>
    <alternativeName>
        <fullName evidence="2">30S ribosomal protein S14</fullName>
    </alternativeName>
</protein>
<organism>
    <name type="scientific">Vibrio vulnificus (strain CMCP6)</name>
    <dbReference type="NCBI Taxonomy" id="216895"/>
    <lineage>
        <taxon>Bacteria</taxon>
        <taxon>Pseudomonadati</taxon>
        <taxon>Pseudomonadota</taxon>
        <taxon>Gammaproteobacteria</taxon>
        <taxon>Vibrionales</taxon>
        <taxon>Vibrionaceae</taxon>
        <taxon>Vibrio</taxon>
    </lineage>
</organism>
<name>RS14_VIBVU</name>
<reference key="1">
    <citation type="submission" date="2002-12" db="EMBL/GenBank/DDBJ databases">
        <title>Complete genome sequence of Vibrio vulnificus CMCP6.</title>
        <authorList>
            <person name="Rhee J.H."/>
            <person name="Kim S.Y."/>
            <person name="Chung S.S."/>
            <person name="Kim J.J."/>
            <person name="Moon Y.H."/>
            <person name="Jeong H."/>
            <person name="Choy H.E."/>
        </authorList>
    </citation>
    <scope>NUCLEOTIDE SEQUENCE [LARGE SCALE GENOMIC DNA]</scope>
    <source>
        <strain>CMCP6</strain>
    </source>
</reference>